<organism>
    <name type="scientific">Arabidopsis thaliana</name>
    <name type="common">Mouse-ear cress</name>
    <dbReference type="NCBI Taxonomy" id="3702"/>
    <lineage>
        <taxon>Eukaryota</taxon>
        <taxon>Viridiplantae</taxon>
        <taxon>Streptophyta</taxon>
        <taxon>Embryophyta</taxon>
        <taxon>Tracheophyta</taxon>
        <taxon>Spermatophyta</taxon>
        <taxon>Magnoliopsida</taxon>
        <taxon>eudicotyledons</taxon>
        <taxon>Gunneridae</taxon>
        <taxon>Pentapetalae</taxon>
        <taxon>rosids</taxon>
        <taxon>malvids</taxon>
        <taxon>Brassicales</taxon>
        <taxon>Brassicaceae</taxon>
        <taxon>Camelineae</taxon>
        <taxon>Arabidopsis</taxon>
    </lineage>
</organism>
<name>LUP3_ARATH</name>
<keyword id="KW-0413">Isomerase</keyword>
<keyword id="KW-1185">Reference proteome</keyword>
<keyword id="KW-0677">Repeat</keyword>
<evidence type="ECO:0000250" key="1">
    <source>
        <dbReference type="UniProtKB" id="P48449"/>
    </source>
</evidence>
<evidence type="ECO:0000269" key="2">
    <source>
    </source>
</evidence>
<evidence type="ECO:0000305" key="3"/>
<protein>
    <recommendedName>
        <fullName>Camelliol C synthase</fullName>
        <ecNumber>5.4.99.38</ecNumber>
    </recommendedName>
    <alternativeName>
        <fullName>Lupeol synthase 3</fullName>
        <shortName>AtLUP3</shortName>
    </alternativeName>
</protein>
<feature type="chain" id="PRO_0000366133" description="Camelliol C synthase">
    <location>
        <begin position="1"/>
        <end position="769"/>
    </location>
</feature>
<feature type="repeat" description="PFTB 1">
    <location>
        <begin position="149"/>
        <end position="190"/>
    </location>
</feature>
<feature type="repeat" description="PFTB 2">
    <location>
        <begin position="641"/>
        <end position="682"/>
    </location>
</feature>
<feature type="active site" description="Proton donor" evidence="1">
    <location>
        <position position="486"/>
    </location>
</feature>
<reference key="1">
    <citation type="journal article" date="2000" name="Nature">
        <title>Sequence and analysis of chromosome 1 of the plant Arabidopsis thaliana.</title>
        <authorList>
            <person name="Theologis A."/>
            <person name="Ecker J.R."/>
            <person name="Palm C.J."/>
            <person name="Federspiel N.A."/>
            <person name="Kaul S."/>
            <person name="White O."/>
            <person name="Alonso J."/>
            <person name="Altafi H."/>
            <person name="Araujo R."/>
            <person name="Bowman C.L."/>
            <person name="Brooks S.Y."/>
            <person name="Buehler E."/>
            <person name="Chan A."/>
            <person name="Chao Q."/>
            <person name="Chen H."/>
            <person name="Cheuk R.F."/>
            <person name="Chin C.W."/>
            <person name="Chung M.K."/>
            <person name="Conn L."/>
            <person name="Conway A.B."/>
            <person name="Conway A.R."/>
            <person name="Creasy T.H."/>
            <person name="Dewar K."/>
            <person name="Dunn P."/>
            <person name="Etgu P."/>
            <person name="Feldblyum T.V."/>
            <person name="Feng J.-D."/>
            <person name="Fong B."/>
            <person name="Fujii C.Y."/>
            <person name="Gill J.E."/>
            <person name="Goldsmith A.D."/>
            <person name="Haas B."/>
            <person name="Hansen N.F."/>
            <person name="Hughes B."/>
            <person name="Huizar L."/>
            <person name="Hunter J.L."/>
            <person name="Jenkins J."/>
            <person name="Johnson-Hopson C."/>
            <person name="Khan S."/>
            <person name="Khaykin E."/>
            <person name="Kim C.J."/>
            <person name="Koo H.L."/>
            <person name="Kremenetskaia I."/>
            <person name="Kurtz D.B."/>
            <person name="Kwan A."/>
            <person name="Lam B."/>
            <person name="Langin-Hooper S."/>
            <person name="Lee A."/>
            <person name="Lee J.M."/>
            <person name="Lenz C.A."/>
            <person name="Li J.H."/>
            <person name="Li Y.-P."/>
            <person name="Lin X."/>
            <person name="Liu S.X."/>
            <person name="Liu Z.A."/>
            <person name="Luros J.S."/>
            <person name="Maiti R."/>
            <person name="Marziali A."/>
            <person name="Militscher J."/>
            <person name="Miranda M."/>
            <person name="Nguyen M."/>
            <person name="Nierman W.C."/>
            <person name="Osborne B.I."/>
            <person name="Pai G."/>
            <person name="Peterson J."/>
            <person name="Pham P.K."/>
            <person name="Rizzo M."/>
            <person name="Rooney T."/>
            <person name="Rowley D."/>
            <person name="Sakano H."/>
            <person name="Salzberg S.L."/>
            <person name="Schwartz J.R."/>
            <person name="Shinn P."/>
            <person name="Southwick A.M."/>
            <person name="Sun H."/>
            <person name="Tallon L.J."/>
            <person name="Tambunga G."/>
            <person name="Toriumi M.J."/>
            <person name="Town C.D."/>
            <person name="Utterback T."/>
            <person name="Van Aken S."/>
            <person name="Vaysberg M."/>
            <person name="Vysotskaia V.S."/>
            <person name="Walker M."/>
            <person name="Wu D."/>
            <person name="Yu G."/>
            <person name="Fraser C.M."/>
            <person name="Venter J.C."/>
            <person name="Davis R.W."/>
        </authorList>
    </citation>
    <scope>NUCLEOTIDE SEQUENCE [LARGE SCALE GENOMIC DNA]</scope>
    <source>
        <strain>cv. Columbia</strain>
    </source>
</reference>
<reference key="2">
    <citation type="journal article" date="2017" name="Plant J.">
        <title>Araport11: a complete reannotation of the Arabidopsis thaliana reference genome.</title>
        <authorList>
            <person name="Cheng C.Y."/>
            <person name="Krishnakumar V."/>
            <person name="Chan A.P."/>
            <person name="Thibaud-Nissen F."/>
            <person name="Schobel S."/>
            <person name="Town C.D."/>
        </authorList>
    </citation>
    <scope>GENOME REANNOTATION</scope>
    <source>
        <strain>cv. Columbia</strain>
    </source>
</reference>
<reference key="3">
    <citation type="journal article" date="2001" name="Plant Mol. Biol.">
        <title>Molecular cloning and expression in yeast of 2,3-oxidosqualene-triterpenoid cyclases from Arabidopsis thaliana.</title>
        <authorList>
            <person name="Husselstein-Muller T."/>
            <person name="Schaller H."/>
            <person name="Benveniste P."/>
        </authorList>
    </citation>
    <scope>IDENTIFICATION</scope>
    <scope>NOMENCLATURE</scope>
</reference>
<reference key="4">
    <citation type="journal article" date="2007" name="Org. Lett.">
        <title>Arabidopsis camelliol C synthase evolved from enzymes that make pentacycles.</title>
        <authorList>
            <person name="Kolesnikova M.D."/>
            <person name="Wilson W.K."/>
            <person name="Lynch D.A."/>
            <person name="Obermeyer A.C."/>
            <person name="Matsuda S.P.T."/>
        </authorList>
    </citation>
    <scope>FUNCTION</scope>
    <scope>CATALYTIC ACTIVITY</scope>
</reference>
<proteinExistence type="evidence at protein level"/>
<comment type="function">
    <text evidence="2">Converts oxidosqualene to camelliol C. Minor production of achilleol and beta-amyrin.</text>
</comment>
<comment type="catalytic activity">
    <reaction evidence="2">
        <text>(S)-2,3-epoxysqualene = camelliol C</text>
        <dbReference type="Rhea" id="RHEA:31011"/>
        <dbReference type="ChEBI" id="CHEBI:15441"/>
        <dbReference type="ChEBI" id="CHEBI:62452"/>
        <dbReference type="EC" id="5.4.99.38"/>
    </reaction>
</comment>
<comment type="similarity">
    <text evidence="3">Belongs to the terpene cyclase/mutase family.</text>
</comment>
<dbReference type="EC" id="5.4.99.38"/>
<dbReference type="EMBL" id="AC002986">
    <property type="protein sequence ID" value="AAC17080.1"/>
    <property type="molecule type" value="Genomic_DNA"/>
</dbReference>
<dbReference type="EMBL" id="CP002684">
    <property type="protein sequence ID" value="AEE36184.1"/>
    <property type="molecule type" value="Genomic_DNA"/>
</dbReference>
<dbReference type="PIR" id="T01060">
    <property type="entry name" value="T01060"/>
</dbReference>
<dbReference type="RefSeq" id="NP_683508.1">
    <property type="nucleotide sequence ID" value="NM_148667.2"/>
</dbReference>
<dbReference type="SMR" id="P0C8Y0"/>
<dbReference type="FunCoup" id="P0C8Y0">
    <property type="interactions" value="875"/>
</dbReference>
<dbReference type="STRING" id="3702.P0C8Y0"/>
<dbReference type="PaxDb" id="3702-AT1G78955.1"/>
<dbReference type="ProteomicsDB" id="238532"/>
<dbReference type="EnsemblPlants" id="AT1G78955.1">
    <property type="protein sequence ID" value="AT1G78955.1"/>
    <property type="gene ID" value="AT1G78955"/>
</dbReference>
<dbReference type="GeneID" id="844235"/>
<dbReference type="Gramene" id="AT1G78955.1">
    <property type="protein sequence ID" value="AT1G78955.1"/>
    <property type="gene ID" value="AT1G78955"/>
</dbReference>
<dbReference type="KEGG" id="ath:AT1G78955"/>
<dbReference type="Araport" id="AT1G78955"/>
<dbReference type="TAIR" id="AT1G78955">
    <property type="gene designation" value="CAMS1"/>
</dbReference>
<dbReference type="eggNOG" id="KOG0497">
    <property type="taxonomic scope" value="Eukaryota"/>
</dbReference>
<dbReference type="HOGENOM" id="CLU_009074_2_0_1"/>
<dbReference type="InParanoid" id="P0C8Y0"/>
<dbReference type="PhylomeDB" id="P0C8Y0"/>
<dbReference type="BioCyc" id="ARA:AT1G78955-MONOMER"/>
<dbReference type="BioCyc" id="MetaCyc:AT1G78955-MONOMER"/>
<dbReference type="BRENDA" id="5.4.99.38">
    <property type="organism ID" value="399"/>
</dbReference>
<dbReference type="PRO" id="PR:P0C8Y0"/>
<dbReference type="Proteomes" id="UP000006548">
    <property type="component" value="Chromosome 1"/>
</dbReference>
<dbReference type="ExpressionAtlas" id="P0C8Y0">
    <property type="expression patterns" value="baseline and differential"/>
</dbReference>
<dbReference type="GO" id="GO:0005811">
    <property type="term" value="C:lipid droplet"/>
    <property type="evidence" value="ECO:0007669"/>
    <property type="project" value="InterPro"/>
</dbReference>
<dbReference type="GO" id="GO:0042300">
    <property type="term" value="F:beta-amyrin synthase activity"/>
    <property type="evidence" value="ECO:0000314"/>
    <property type="project" value="TAIR"/>
</dbReference>
<dbReference type="GO" id="GO:0090438">
    <property type="term" value="F:camelliol C synthase activity"/>
    <property type="evidence" value="ECO:0000314"/>
    <property type="project" value="TAIR"/>
</dbReference>
<dbReference type="GO" id="GO:0016104">
    <property type="term" value="P:triterpenoid biosynthetic process"/>
    <property type="evidence" value="ECO:0007669"/>
    <property type="project" value="InterPro"/>
</dbReference>
<dbReference type="CDD" id="cd02892">
    <property type="entry name" value="SQCY_1"/>
    <property type="match status" value="1"/>
</dbReference>
<dbReference type="FunFam" id="1.50.10.20:FF:000011">
    <property type="entry name" value="Terpene cyclase/mutase family member"/>
    <property type="match status" value="1"/>
</dbReference>
<dbReference type="FunFam" id="1.50.10.20:FF:000064">
    <property type="entry name" value="Uncharacterized protein"/>
    <property type="match status" value="1"/>
</dbReference>
<dbReference type="Gene3D" id="1.50.10.20">
    <property type="match status" value="2"/>
</dbReference>
<dbReference type="InterPro" id="IPR032696">
    <property type="entry name" value="SQ_cyclase_C"/>
</dbReference>
<dbReference type="InterPro" id="IPR032697">
    <property type="entry name" value="SQ_cyclase_N"/>
</dbReference>
<dbReference type="InterPro" id="IPR018333">
    <property type="entry name" value="Squalene_cyclase"/>
</dbReference>
<dbReference type="InterPro" id="IPR008930">
    <property type="entry name" value="Terpenoid_cyclase/PrenylTrfase"/>
</dbReference>
<dbReference type="NCBIfam" id="TIGR01787">
    <property type="entry name" value="squalene_cyclas"/>
    <property type="match status" value="1"/>
</dbReference>
<dbReference type="PANTHER" id="PTHR11764:SF58">
    <property type="entry name" value="BETA-AMYRIN SYNTHASE-RELATED"/>
    <property type="match status" value="1"/>
</dbReference>
<dbReference type="PANTHER" id="PTHR11764">
    <property type="entry name" value="TERPENE CYCLASE/MUTASE FAMILY MEMBER"/>
    <property type="match status" value="1"/>
</dbReference>
<dbReference type="Pfam" id="PF13243">
    <property type="entry name" value="SQHop_cyclase_C"/>
    <property type="match status" value="1"/>
</dbReference>
<dbReference type="Pfam" id="PF13249">
    <property type="entry name" value="SQHop_cyclase_N"/>
    <property type="match status" value="1"/>
</dbReference>
<dbReference type="SFLD" id="SFLDG01016">
    <property type="entry name" value="Prenyltransferase_Like_2"/>
    <property type="match status" value="1"/>
</dbReference>
<dbReference type="SUPFAM" id="SSF48239">
    <property type="entry name" value="Terpenoid cyclases/Protein prenyltransferases"/>
    <property type="match status" value="2"/>
</dbReference>
<gene>
    <name type="primary">CAMS1</name>
    <name type="synonym">LUP3</name>
    <name type="ordered locus">At1g78955</name>
    <name type="ORF">YUP8H12R.44</name>
</gene>
<sequence>MWKLKIANGNKEEPYLFSTNNFLGRQTWEFDPDAGTVEELAAVEEARRKFYDDRFRVKASSDLIWRMQFLKEKKFEQVIPPAKVEDANNITSEIATNALRKGVNFLSALQASDGHWPAENAGPLFFLPPLVFCLYVTGHLHEIFTQDHRREVLRYIYCHQNEDGGWGLHIEGNSTMFCTTLNYICMRILGEGPNGGPGNACKRARDWILDHGGATYIPSWGKTWLSILGVFDWSGSNPMPPEFWILPSFLPIHPAKMWCYCRLVYMPMSYLYGKRFVGPISPLILQLREEIYLQPYAKINWNRARHLCAKEDAYCPHPQIQDVIWNCLYIFTEPFLACWPFNKLLREKALGVAMKHIHYEDENSRYITIGCVEKALCMLACWVEDPNGIHFKKHLLRISDYLWIAEDGMKMQSFGSQLWDSGFALQALVASNLVNEIPDVLRRGYDFLKNSQVRENPSGDFTNMYRHISKGSWTFSDRDHGWQASDCTAESFKCCLLLSMIPPDIVGPKMDPEQLYEAVTILLSLQSKNGGVTAWEPARGQEWLELLNPTEVFADIVVEHEYNECTSSAIQALILFKQLYPNHRTEEINTSIKKAVQYIESIQMLDGSWYGSWGVCFTYSTWFGLGGLAAAGKTYNNCLAMRKGVHFLLTTQKDNGGWGESYLSCPKKRYIPSEGERSNLVQTSWAMMGLLHAGQAERDPSPLHRAAKLLINSQLENGDFPQQEITGAFMKNCLLHYAAYRNIFPVWALAEYRRRVPLPYEKPSTERRS</sequence>
<accession>P0C8Y0</accession>
<accession>O64553</accession>